<feature type="chain" id="PRO_0000142257" description="Imidazole glycerol phosphate synthase subunit HisF">
    <location>
        <begin position="1"/>
        <end position="257"/>
    </location>
</feature>
<feature type="active site" evidence="2">
    <location>
        <position position="11"/>
    </location>
</feature>
<feature type="active site" evidence="2">
    <location>
        <position position="130"/>
    </location>
</feature>
<proteinExistence type="inferred from homology"/>
<organism>
    <name type="scientific">Vibrio cholerae serotype O1 (strain ATCC 39315 / El Tor Inaba N16961)</name>
    <dbReference type="NCBI Taxonomy" id="243277"/>
    <lineage>
        <taxon>Bacteria</taxon>
        <taxon>Pseudomonadati</taxon>
        <taxon>Pseudomonadota</taxon>
        <taxon>Gammaproteobacteria</taxon>
        <taxon>Vibrionales</taxon>
        <taxon>Vibrionaceae</taxon>
        <taxon>Vibrio</taxon>
    </lineage>
</organism>
<accession>Q9KSW8</accession>
<keyword id="KW-0028">Amino-acid biosynthesis</keyword>
<keyword id="KW-0963">Cytoplasm</keyword>
<keyword id="KW-0368">Histidine biosynthesis</keyword>
<keyword id="KW-0456">Lyase</keyword>
<keyword id="KW-1185">Reference proteome</keyword>
<protein>
    <recommendedName>
        <fullName>Imidazole glycerol phosphate synthase subunit HisF</fullName>
        <ecNumber>4.3.2.10</ecNumber>
    </recommendedName>
    <alternativeName>
        <fullName>IGP synthase cyclase subunit</fullName>
    </alternativeName>
    <alternativeName>
        <fullName>IGP synthase subunit HisF</fullName>
    </alternativeName>
    <alternativeName>
        <fullName>ImGP synthase subunit HisF</fullName>
        <shortName>IGPS subunit HisF</shortName>
    </alternativeName>
</protein>
<reference key="1">
    <citation type="journal article" date="2000" name="Nature">
        <title>DNA sequence of both chromosomes of the cholera pathogen Vibrio cholerae.</title>
        <authorList>
            <person name="Heidelberg J.F."/>
            <person name="Eisen J.A."/>
            <person name="Nelson W.C."/>
            <person name="Clayton R.A."/>
            <person name="Gwinn M.L."/>
            <person name="Dodson R.J."/>
            <person name="Haft D.H."/>
            <person name="Hickey E.K."/>
            <person name="Peterson J.D."/>
            <person name="Umayam L.A."/>
            <person name="Gill S.R."/>
            <person name="Nelson K.E."/>
            <person name="Read T.D."/>
            <person name="Tettelin H."/>
            <person name="Richardson D.L."/>
            <person name="Ermolaeva M.D."/>
            <person name="Vamathevan J.J."/>
            <person name="Bass S."/>
            <person name="Qin H."/>
            <person name="Dragoi I."/>
            <person name="Sellers P."/>
            <person name="McDonald L.A."/>
            <person name="Utterback T.R."/>
            <person name="Fleischmann R.D."/>
            <person name="Nierman W.C."/>
            <person name="White O."/>
            <person name="Salzberg S.L."/>
            <person name="Smith H.O."/>
            <person name="Colwell R.R."/>
            <person name="Mekalanos J.J."/>
            <person name="Venter J.C."/>
            <person name="Fraser C.M."/>
        </authorList>
    </citation>
    <scope>NUCLEOTIDE SEQUENCE [LARGE SCALE GENOMIC DNA]</scope>
    <source>
        <strain>ATCC 39315 / El Tor Inaba N16961</strain>
    </source>
</reference>
<gene>
    <name type="primary">hisF</name>
    <name type="ordered locus">VC_1138</name>
</gene>
<sequence length="257" mass="28338">MLAKRIIPCLDVRDGQVVKGVQFRNHEIIGDIVPLAKRYAEEGADELVFYDITASSDGRVVDKSWVARVAEVIDIPFCVAGGIKSAQDAARILEFGADKVSINSPALANPQLITDLADRFGVQCIVVGIDSYFDKETGQYQVYQFTGDESRTRATQWQTCDWVQEVQKRGAGEIVLNMMNQDGVRNGYDLEQLNLVRSVCRVPLIASGGAGAMEHFAQAFTQANVDGALAASVFHKQIINIGELKQYLKQQGIEVRR</sequence>
<comment type="function">
    <text evidence="1">IGPS catalyzes the conversion of PRFAR and glutamine to IGP, AICAR and glutamate. The HisF subunit catalyzes the cyclization activity that produces IGP and AICAR from PRFAR using the ammonia provided by the HisH subunit (By similarity).</text>
</comment>
<comment type="catalytic activity">
    <reaction>
        <text>5-[(5-phospho-1-deoxy-D-ribulos-1-ylimino)methylamino]-1-(5-phospho-beta-D-ribosyl)imidazole-4-carboxamide + L-glutamine = D-erythro-1-(imidazol-4-yl)glycerol 3-phosphate + 5-amino-1-(5-phospho-beta-D-ribosyl)imidazole-4-carboxamide + L-glutamate + H(+)</text>
        <dbReference type="Rhea" id="RHEA:24793"/>
        <dbReference type="ChEBI" id="CHEBI:15378"/>
        <dbReference type="ChEBI" id="CHEBI:29985"/>
        <dbReference type="ChEBI" id="CHEBI:58278"/>
        <dbReference type="ChEBI" id="CHEBI:58359"/>
        <dbReference type="ChEBI" id="CHEBI:58475"/>
        <dbReference type="ChEBI" id="CHEBI:58525"/>
        <dbReference type="EC" id="4.3.2.10"/>
    </reaction>
</comment>
<comment type="pathway">
    <text>Amino-acid biosynthesis; L-histidine biosynthesis; L-histidine from 5-phospho-alpha-D-ribose 1-diphosphate: step 5/9.</text>
</comment>
<comment type="subunit">
    <text evidence="1">Heterodimer of HisH and HisF.</text>
</comment>
<comment type="subcellular location">
    <subcellularLocation>
        <location evidence="1">Cytoplasm</location>
    </subcellularLocation>
</comment>
<comment type="similarity">
    <text evidence="3">Belongs to the HisA/HisF family.</text>
</comment>
<dbReference type="EC" id="4.3.2.10"/>
<dbReference type="EMBL" id="AE003852">
    <property type="protein sequence ID" value="AAF94297.1"/>
    <property type="molecule type" value="Genomic_DNA"/>
</dbReference>
<dbReference type="PIR" id="E82238">
    <property type="entry name" value="E82238"/>
</dbReference>
<dbReference type="RefSeq" id="NP_230783.1">
    <property type="nucleotide sequence ID" value="NC_002505.1"/>
</dbReference>
<dbReference type="RefSeq" id="WP_000880146.1">
    <property type="nucleotide sequence ID" value="NZ_LT906614.1"/>
</dbReference>
<dbReference type="SMR" id="Q9KSW8"/>
<dbReference type="STRING" id="243277.VC_1138"/>
<dbReference type="DNASU" id="2614408"/>
<dbReference type="EnsemblBacteria" id="AAF94297">
    <property type="protein sequence ID" value="AAF94297"/>
    <property type="gene ID" value="VC_1138"/>
</dbReference>
<dbReference type="GeneID" id="94014095"/>
<dbReference type="KEGG" id="vch:VC_1138"/>
<dbReference type="PATRIC" id="fig|243277.26.peg.1087"/>
<dbReference type="eggNOG" id="COG0107">
    <property type="taxonomic scope" value="Bacteria"/>
</dbReference>
<dbReference type="HOGENOM" id="CLU_048577_4_0_6"/>
<dbReference type="UniPathway" id="UPA00031">
    <property type="reaction ID" value="UER00010"/>
</dbReference>
<dbReference type="Proteomes" id="UP000000584">
    <property type="component" value="Chromosome 1"/>
</dbReference>
<dbReference type="GO" id="GO:0005737">
    <property type="term" value="C:cytoplasm"/>
    <property type="evidence" value="ECO:0007669"/>
    <property type="project" value="UniProtKB-SubCell"/>
</dbReference>
<dbReference type="GO" id="GO:0000107">
    <property type="term" value="F:imidazoleglycerol-phosphate synthase activity"/>
    <property type="evidence" value="ECO:0000318"/>
    <property type="project" value="GO_Central"/>
</dbReference>
<dbReference type="GO" id="GO:0016829">
    <property type="term" value="F:lyase activity"/>
    <property type="evidence" value="ECO:0007669"/>
    <property type="project" value="UniProtKB-KW"/>
</dbReference>
<dbReference type="GO" id="GO:0000105">
    <property type="term" value="P:L-histidine biosynthetic process"/>
    <property type="evidence" value="ECO:0007669"/>
    <property type="project" value="UniProtKB-UniRule"/>
</dbReference>
<dbReference type="CDD" id="cd04731">
    <property type="entry name" value="HisF"/>
    <property type="match status" value="1"/>
</dbReference>
<dbReference type="FunFam" id="3.20.20.70:FF:000006">
    <property type="entry name" value="Imidazole glycerol phosphate synthase subunit HisF"/>
    <property type="match status" value="1"/>
</dbReference>
<dbReference type="Gene3D" id="3.20.20.70">
    <property type="entry name" value="Aldolase class I"/>
    <property type="match status" value="1"/>
</dbReference>
<dbReference type="HAMAP" id="MF_01013">
    <property type="entry name" value="HisF"/>
    <property type="match status" value="1"/>
</dbReference>
<dbReference type="InterPro" id="IPR013785">
    <property type="entry name" value="Aldolase_TIM"/>
</dbReference>
<dbReference type="InterPro" id="IPR006062">
    <property type="entry name" value="His_biosynth"/>
</dbReference>
<dbReference type="InterPro" id="IPR004651">
    <property type="entry name" value="HisF"/>
</dbReference>
<dbReference type="InterPro" id="IPR050064">
    <property type="entry name" value="IGPS_HisA/HisF"/>
</dbReference>
<dbReference type="InterPro" id="IPR011060">
    <property type="entry name" value="RibuloseP-bd_barrel"/>
</dbReference>
<dbReference type="NCBIfam" id="TIGR00735">
    <property type="entry name" value="hisF"/>
    <property type="match status" value="1"/>
</dbReference>
<dbReference type="PANTHER" id="PTHR21235:SF2">
    <property type="entry name" value="IMIDAZOLE GLYCEROL PHOSPHATE SYNTHASE HISHF"/>
    <property type="match status" value="1"/>
</dbReference>
<dbReference type="PANTHER" id="PTHR21235">
    <property type="entry name" value="IMIDAZOLE GLYCEROL PHOSPHATE SYNTHASE SUBUNIT HISF/H IGP SYNTHASE SUBUNIT HISF/H"/>
    <property type="match status" value="1"/>
</dbReference>
<dbReference type="Pfam" id="PF00977">
    <property type="entry name" value="His_biosynth"/>
    <property type="match status" value="1"/>
</dbReference>
<dbReference type="SUPFAM" id="SSF51366">
    <property type="entry name" value="Ribulose-phoshate binding barrel"/>
    <property type="match status" value="1"/>
</dbReference>
<evidence type="ECO:0000250" key="1"/>
<evidence type="ECO:0000255" key="2"/>
<evidence type="ECO:0000305" key="3"/>
<name>HIS6_VIBCH</name>